<evidence type="ECO:0000255" key="1">
    <source>
        <dbReference type="HAMAP-Rule" id="MF_01364"/>
    </source>
</evidence>
<evidence type="ECO:0000305" key="2"/>
<accession>B1MGD4</accession>
<gene>
    <name evidence="1" type="primary">rpsZ</name>
    <name evidence="1" type="synonym">rpsN</name>
    <name type="ordered locus">MAB_3804c</name>
</gene>
<keyword id="KW-0479">Metal-binding</keyword>
<keyword id="KW-1185">Reference proteome</keyword>
<keyword id="KW-0687">Ribonucleoprotein</keyword>
<keyword id="KW-0689">Ribosomal protein</keyword>
<keyword id="KW-0694">RNA-binding</keyword>
<keyword id="KW-0699">rRNA-binding</keyword>
<keyword id="KW-0862">Zinc</keyword>
<feature type="chain" id="PRO_1000143914" description="Small ribosomal subunit protein uS14B">
    <location>
        <begin position="1"/>
        <end position="61"/>
    </location>
</feature>
<feature type="binding site" evidence="1">
    <location>
        <position position="24"/>
    </location>
    <ligand>
        <name>Zn(2+)</name>
        <dbReference type="ChEBI" id="CHEBI:29105"/>
    </ligand>
</feature>
<feature type="binding site" evidence="1">
    <location>
        <position position="27"/>
    </location>
    <ligand>
        <name>Zn(2+)</name>
        <dbReference type="ChEBI" id="CHEBI:29105"/>
    </ligand>
</feature>
<feature type="binding site" evidence="1">
    <location>
        <position position="40"/>
    </location>
    <ligand>
        <name>Zn(2+)</name>
        <dbReference type="ChEBI" id="CHEBI:29105"/>
    </ligand>
</feature>
<feature type="binding site" evidence="1">
    <location>
        <position position="43"/>
    </location>
    <ligand>
        <name>Zn(2+)</name>
        <dbReference type="ChEBI" id="CHEBI:29105"/>
    </ligand>
</feature>
<dbReference type="EMBL" id="CU458896">
    <property type="protein sequence ID" value="CAM63879.1"/>
    <property type="molecule type" value="Genomic_DNA"/>
</dbReference>
<dbReference type="RefSeq" id="WP_005055692.1">
    <property type="nucleotide sequence ID" value="NZ_MLCG01000001.1"/>
</dbReference>
<dbReference type="SMR" id="B1MGD4"/>
<dbReference type="GeneID" id="93380743"/>
<dbReference type="KEGG" id="mab:MAB_3804c"/>
<dbReference type="Proteomes" id="UP000007137">
    <property type="component" value="Chromosome"/>
</dbReference>
<dbReference type="GO" id="GO:0005737">
    <property type="term" value="C:cytoplasm"/>
    <property type="evidence" value="ECO:0007669"/>
    <property type="project" value="UniProtKB-ARBA"/>
</dbReference>
<dbReference type="GO" id="GO:0015935">
    <property type="term" value="C:small ribosomal subunit"/>
    <property type="evidence" value="ECO:0007669"/>
    <property type="project" value="TreeGrafter"/>
</dbReference>
<dbReference type="GO" id="GO:0019843">
    <property type="term" value="F:rRNA binding"/>
    <property type="evidence" value="ECO:0007669"/>
    <property type="project" value="UniProtKB-UniRule"/>
</dbReference>
<dbReference type="GO" id="GO:0003735">
    <property type="term" value="F:structural constituent of ribosome"/>
    <property type="evidence" value="ECO:0007669"/>
    <property type="project" value="InterPro"/>
</dbReference>
<dbReference type="GO" id="GO:0008270">
    <property type="term" value="F:zinc ion binding"/>
    <property type="evidence" value="ECO:0007669"/>
    <property type="project" value="UniProtKB-UniRule"/>
</dbReference>
<dbReference type="GO" id="GO:0006412">
    <property type="term" value="P:translation"/>
    <property type="evidence" value="ECO:0007669"/>
    <property type="project" value="UniProtKB-UniRule"/>
</dbReference>
<dbReference type="FunFam" id="4.10.830.10:FF:000001">
    <property type="entry name" value="30S ribosomal protein S14 type Z"/>
    <property type="match status" value="1"/>
</dbReference>
<dbReference type="Gene3D" id="4.10.830.10">
    <property type="entry name" value="30s Ribosomal Protein S14, Chain N"/>
    <property type="match status" value="1"/>
</dbReference>
<dbReference type="HAMAP" id="MF_01364_B">
    <property type="entry name" value="Ribosomal_uS14_2_B"/>
    <property type="match status" value="1"/>
</dbReference>
<dbReference type="InterPro" id="IPR001209">
    <property type="entry name" value="Ribosomal_uS14"/>
</dbReference>
<dbReference type="InterPro" id="IPR023053">
    <property type="entry name" value="Ribosomal_uS14_bact"/>
</dbReference>
<dbReference type="InterPro" id="IPR018271">
    <property type="entry name" value="Ribosomal_uS14_CS"/>
</dbReference>
<dbReference type="InterPro" id="IPR043140">
    <property type="entry name" value="Ribosomal_uS14_sf"/>
</dbReference>
<dbReference type="NCBIfam" id="NF005974">
    <property type="entry name" value="PRK08061.1"/>
    <property type="match status" value="1"/>
</dbReference>
<dbReference type="PANTHER" id="PTHR19836">
    <property type="entry name" value="30S RIBOSOMAL PROTEIN S14"/>
    <property type="match status" value="1"/>
</dbReference>
<dbReference type="PANTHER" id="PTHR19836:SF19">
    <property type="entry name" value="SMALL RIBOSOMAL SUBUNIT PROTEIN US14M"/>
    <property type="match status" value="1"/>
</dbReference>
<dbReference type="Pfam" id="PF00253">
    <property type="entry name" value="Ribosomal_S14"/>
    <property type="match status" value="1"/>
</dbReference>
<dbReference type="SUPFAM" id="SSF57716">
    <property type="entry name" value="Glucocorticoid receptor-like (DNA-binding domain)"/>
    <property type="match status" value="1"/>
</dbReference>
<dbReference type="PROSITE" id="PS00527">
    <property type="entry name" value="RIBOSOMAL_S14"/>
    <property type="match status" value="1"/>
</dbReference>
<proteinExistence type="inferred from homology"/>
<organism>
    <name type="scientific">Mycobacteroides abscessus (strain ATCC 19977 / DSM 44196 / CCUG 20993 / CIP 104536 / JCM 13569 / NCTC 13031 / TMC 1543 / L948)</name>
    <name type="common">Mycobacterium abscessus</name>
    <dbReference type="NCBI Taxonomy" id="561007"/>
    <lineage>
        <taxon>Bacteria</taxon>
        <taxon>Bacillati</taxon>
        <taxon>Actinomycetota</taxon>
        <taxon>Actinomycetes</taxon>
        <taxon>Mycobacteriales</taxon>
        <taxon>Mycobacteriaceae</taxon>
        <taxon>Mycobacteroides</taxon>
        <taxon>Mycobacteroides abscessus</taxon>
    </lineage>
</organism>
<reference key="1">
    <citation type="journal article" date="2009" name="PLoS ONE">
        <title>Non mycobacterial virulence genes in the genome of the emerging pathogen Mycobacterium abscessus.</title>
        <authorList>
            <person name="Ripoll F."/>
            <person name="Pasek S."/>
            <person name="Schenowitz C."/>
            <person name="Dossat C."/>
            <person name="Barbe V."/>
            <person name="Rottman M."/>
            <person name="Macheras E."/>
            <person name="Heym B."/>
            <person name="Herrmann J.L."/>
            <person name="Daffe M."/>
            <person name="Brosch R."/>
            <person name="Risler J.L."/>
            <person name="Gaillard J.L."/>
        </authorList>
    </citation>
    <scope>NUCLEOTIDE SEQUENCE [LARGE SCALE GENOMIC DNA]</scope>
    <source>
        <strain>ATCC 19977 / DSM 44196 / CCUG 20993 / CIP 104536 / JCM 13569 / NCTC 13031 / TMC 1543 / L948</strain>
    </source>
</reference>
<protein>
    <recommendedName>
        <fullName evidence="1">Small ribosomal subunit protein uS14B</fullName>
    </recommendedName>
    <alternativeName>
        <fullName evidence="2">30S ribosomal protein S14 type Z</fullName>
    </alternativeName>
</protein>
<sequence length="61" mass="6911">MAKKALVNKAAKKPKFAVRAYTRCNRCGRPHAVFRKFGLCRICLREMAHAGELPGIHKSSW</sequence>
<name>RS14Z_MYCA9</name>
<comment type="function">
    <text evidence="1">Binds 16S rRNA, required for the assembly of 30S particles and may also be responsible for determining the conformation of the 16S rRNA at the A site.</text>
</comment>
<comment type="cofactor">
    <cofactor evidence="1">
        <name>Zn(2+)</name>
        <dbReference type="ChEBI" id="CHEBI:29105"/>
    </cofactor>
    <text evidence="1">Binds 1 zinc ion per subunit.</text>
</comment>
<comment type="subunit">
    <text evidence="1">Part of the 30S ribosomal subunit. Contacts proteins S3 and S10.</text>
</comment>
<comment type="similarity">
    <text evidence="1">Belongs to the universal ribosomal protein uS14 family. Zinc-binding uS14 subfamily.</text>
</comment>